<gene>
    <name type="ordered locus">Bcep1808_2579</name>
</gene>
<reference key="1">
    <citation type="submission" date="2007-03" db="EMBL/GenBank/DDBJ databases">
        <title>Complete sequence of chromosome 1 of Burkholderia vietnamiensis G4.</title>
        <authorList>
            <consortium name="US DOE Joint Genome Institute"/>
            <person name="Copeland A."/>
            <person name="Lucas S."/>
            <person name="Lapidus A."/>
            <person name="Barry K."/>
            <person name="Detter J.C."/>
            <person name="Glavina del Rio T."/>
            <person name="Hammon N."/>
            <person name="Israni S."/>
            <person name="Dalin E."/>
            <person name="Tice H."/>
            <person name="Pitluck S."/>
            <person name="Chain P."/>
            <person name="Malfatti S."/>
            <person name="Shin M."/>
            <person name="Vergez L."/>
            <person name="Schmutz J."/>
            <person name="Larimer F."/>
            <person name="Land M."/>
            <person name="Hauser L."/>
            <person name="Kyrpides N."/>
            <person name="Tiedje J."/>
            <person name="Richardson P."/>
        </authorList>
    </citation>
    <scope>NUCLEOTIDE SEQUENCE [LARGE SCALE GENOMIC DNA]</scope>
    <source>
        <strain>G4 / LMG 22486</strain>
    </source>
</reference>
<accession>A4JH21</accession>
<proteinExistence type="inferred from homology"/>
<feature type="chain" id="PRO_0000322680" description="UPF0758 protein Bcep1808_2579">
    <location>
        <begin position="1"/>
        <end position="258"/>
    </location>
</feature>
<feature type="domain" description="MPN" evidence="1">
    <location>
        <begin position="136"/>
        <end position="258"/>
    </location>
</feature>
<feature type="short sequence motif" description="JAMM motif" evidence="1">
    <location>
        <begin position="207"/>
        <end position="220"/>
    </location>
</feature>
<feature type="binding site" evidence="1">
    <location>
        <position position="207"/>
    </location>
    <ligand>
        <name>Zn(2+)</name>
        <dbReference type="ChEBI" id="CHEBI:29105"/>
        <note>catalytic</note>
    </ligand>
</feature>
<feature type="binding site" evidence="1">
    <location>
        <position position="209"/>
    </location>
    <ligand>
        <name>Zn(2+)</name>
        <dbReference type="ChEBI" id="CHEBI:29105"/>
        <note>catalytic</note>
    </ligand>
</feature>
<feature type="binding site" evidence="1">
    <location>
        <position position="220"/>
    </location>
    <ligand>
        <name>Zn(2+)</name>
        <dbReference type="ChEBI" id="CHEBI:29105"/>
        <note>catalytic</note>
    </ligand>
</feature>
<comment type="similarity">
    <text evidence="2">Belongs to the UPF0758 family.</text>
</comment>
<keyword id="KW-0378">Hydrolase</keyword>
<keyword id="KW-0479">Metal-binding</keyword>
<keyword id="KW-0482">Metalloprotease</keyword>
<keyword id="KW-0645">Protease</keyword>
<keyword id="KW-0862">Zinc</keyword>
<organism>
    <name type="scientific">Burkholderia vietnamiensis (strain G4 / LMG 22486)</name>
    <name type="common">Burkholderia cepacia (strain R1808)</name>
    <dbReference type="NCBI Taxonomy" id="269482"/>
    <lineage>
        <taxon>Bacteria</taxon>
        <taxon>Pseudomonadati</taxon>
        <taxon>Pseudomonadota</taxon>
        <taxon>Betaproteobacteria</taxon>
        <taxon>Burkholderiales</taxon>
        <taxon>Burkholderiaceae</taxon>
        <taxon>Burkholderia</taxon>
        <taxon>Burkholderia cepacia complex</taxon>
    </lineage>
</organism>
<evidence type="ECO:0000255" key="1">
    <source>
        <dbReference type="PROSITE-ProRule" id="PRU01182"/>
    </source>
</evidence>
<evidence type="ECO:0000305" key="2"/>
<protein>
    <recommendedName>
        <fullName>UPF0758 protein Bcep1808_2579</fullName>
    </recommendedName>
</protein>
<name>Y2579_BURVG</name>
<dbReference type="EMBL" id="CP000614">
    <property type="protein sequence ID" value="ABO55574.1"/>
    <property type="molecule type" value="Genomic_DNA"/>
</dbReference>
<dbReference type="SMR" id="A4JH21"/>
<dbReference type="KEGG" id="bvi:Bcep1808_2579"/>
<dbReference type="eggNOG" id="COG2003">
    <property type="taxonomic scope" value="Bacteria"/>
</dbReference>
<dbReference type="HOGENOM" id="CLU_073529_0_1_4"/>
<dbReference type="Proteomes" id="UP000002287">
    <property type="component" value="Chromosome 1"/>
</dbReference>
<dbReference type="GO" id="GO:0046872">
    <property type="term" value="F:metal ion binding"/>
    <property type="evidence" value="ECO:0007669"/>
    <property type="project" value="UniProtKB-KW"/>
</dbReference>
<dbReference type="GO" id="GO:0008237">
    <property type="term" value="F:metallopeptidase activity"/>
    <property type="evidence" value="ECO:0007669"/>
    <property type="project" value="UniProtKB-KW"/>
</dbReference>
<dbReference type="GO" id="GO:0006508">
    <property type="term" value="P:proteolysis"/>
    <property type="evidence" value="ECO:0007669"/>
    <property type="project" value="UniProtKB-KW"/>
</dbReference>
<dbReference type="CDD" id="cd08071">
    <property type="entry name" value="MPN_DUF2466"/>
    <property type="match status" value="1"/>
</dbReference>
<dbReference type="Gene3D" id="3.40.140.10">
    <property type="entry name" value="Cytidine Deaminase, domain 2"/>
    <property type="match status" value="1"/>
</dbReference>
<dbReference type="InterPro" id="IPR037518">
    <property type="entry name" value="MPN"/>
</dbReference>
<dbReference type="InterPro" id="IPR025657">
    <property type="entry name" value="RadC_JAB"/>
</dbReference>
<dbReference type="InterPro" id="IPR001405">
    <property type="entry name" value="UPF0758"/>
</dbReference>
<dbReference type="InterPro" id="IPR020891">
    <property type="entry name" value="UPF0758_CS"/>
</dbReference>
<dbReference type="InterPro" id="IPR046778">
    <property type="entry name" value="UPF0758_N"/>
</dbReference>
<dbReference type="NCBIfam" id="NF000642">
    <property type="entry name" value="PRK00024.1"/>
    <property type="match status" value="1"/>
</dbReference>
<dbReference type="NCBIfam" id="TIGR00608">
    <property type="entry name" value="radc"/>
    <property type="match status" value="1"/>
</dbReference>
<dbReference type="PANTHER" id="PTHR30471">
    <property type="entry name" value="DNA REPAIR PROTEIN RADC"/>
    <property type="match status" value="1"/>
</dbReference>
<dbReference type="PANTHER" id="PTHR30471:SF3">
    <property type="entry name" value="UPF0758 PROTEIN YEES-RELATED"/>
    <property type="match status" value="1"/>
</dbReference>
<dbReference type="Pfam" id="PF04002">
    <property type="entry name" value="RadC"/>
    <property type="match status" value="1"/>
</dbReference>
<dbReference type="Pfam" id="PF20582">
    <property type="entry name" value="UPF0758_N"/>
    <property type="match status" value="1"/>
</dbReference>
<dbReference type="PROSITE" id="PS50249">
    <property type="entry name" value="MPN"/>
    <property type="match status" value="1"/>
</dbReference>
<dbReference type="PROSITE" id="PS01302">
    <property type="entry name" value="UPF0758"/>
    <property type="match status" value="1"/>
</dbReference>
<sequence>MPSSCVAAPATECRDLADPAPAPAHRVAIEWPRKRRARNWKPHLPRERLLERGPAALTDAELVALLLGTGGGGRDVFDSARALLARFGDSLRDMLDAQPGVFTTHPGIGDARAAVLIAVTEITRRALVEKARRRMPIDSPGAVEDYLRLRIGMRPYEVFVTLYLDARHGLIEVEESARGSLTRMAVYPREIVRRALMLNAASLIIAHNHPSGAVQPSAEDRRLTRVLHEALALVDAKLLDHVVVGTADTFSFARAGWL</sequence>